<sequence length="1434" mass="160780">MLNDILSRVARVGAMHAGNRPNPPDDRPQPCRGKPPTSPGKTIKHKSFLGALAGAVAGALVAAAVAAAAVFLVGVTGGLAVAAVGALAVFAAGDLISAVTNKVSAMVDSASPAFGPVASGSGNVFVEKQPVARATKDTVACTKHNSPQLIAQGSESVFVNDAPAARIDDKTVCGATVKEGASTVFFGSGQGTYLDIADEFSWWEKALLIAVEFLVPPSRGMLKGLGKLFIRGPKAVLRGSRAGAKWIAGRLADKSSCASKAFKASSGLTRAKAAVKAFLKDPVYIASGEVIESRTDIELGQTLPLAFERTYRSASVHIGLLGRGWHDSWSEVATVTRDGLNTHVVITLAQGYDIDFTFHQDVQAVYCPHYPEFTLHRRGDGFSLWHRDQQTWRDFSVVQGERRLLSAIHDSHDNRIELVRDPKGYLRQVRHSDGVTLLLVWQGEFLHQIQRIDGGQKTLLAEYRQDEQGRLVEANATQAYHLYYDYDAAHRLTRWHDNDQTWARYEYDAQGRCVYTTCADGFLTARFDYLPDRVVMTDGLGQCSEFGFNDLFLMSWEKSPLGHVTRYEYDDYGNLLREISPAGRVVEFTYLDDTGRVSTFTDASGHQWQYDYDAAQRLCGVTDPLGREWGWMYDAEGNPERLTGPDASEVRFTWNRYGLLTQVSDAAGEVQARLQYDHRQRLLSATDAESRTRQLRYDGQDRVVQWQRADGARFRLGYRRASWTLPEQLIRPDDKEEQRQYDRHNNLLSYVDGNGALWRQTFGPFDLLTARTDAEGRTWHYAYDKESQQLTTVIAPDGSHWQWWLDADGRVIRERDMTGTETHYDYDEDGLCIRVRNGEGDTRHFLYDARGLLLRETAPDDTLHYRYDAVGRLTEVSSSTAHVQLEYDLRDRMVREWHNGTLLTRQVDDAARTVTRTLTWDGDADDTINALAPLTSLFHYTRTGELRQVQLPDGADLTLTHDAAGRESHRTGGSGFVQQREYDVMGWLTREMSGAQHDGHLLATQTREYRYDGAGNLTGVRHNRDAEGYRLDATGRVQEILSGGAGKPVDTTARFLYTRTGLPQEAGRLTEWQAGRLVQHDDTHYQYDRAGRLIRKQVVQPGYRPQVWQYRWDSRNQLRVVDTPNGERWLYRYDPFGRRVGKRCDQKAEEIRYLWDGDQIAEIRHYRHGQLIQRRHWVYNGWELVVQQRQHTGGDWETDFVTSSQNGTPQALFTPDGTLRWQAPKATLWGQRQAEKSESPDPGLAFAGQLRDSESGLCYNRFRYYDPAGGCYVSPDPIGIAGGESNYGYVSNPMCWVDPFGLAKCPTLAHGANGEILSAKATVSKAELRTGSGTNQSSRDYARSLGNQTDDAGHILGNVLGGQGGKGNVFPQLPAINRGQYRDFEKVVKDYIGQHGSVDIEWAFKYGNGGTRPTEIYYDVYQNGQKVFGRIFNN</sequence>
<evidence type="ECO:0000255" key="1"/>
<evidence type="ECO:0000256" key="2">
    <source>
        <dbReference type="SAM" id="MobiDB-lite"/>
    </source>
</evidence>
<evidence type="ECO:0000269" key="3">
    <source>
    </source>
</evidence>
<evidence type="ECO:0000305" key="4"/>
<comment type="function">
    <text evidence="3">Toxic component of a toxin-immunity protein module, which functions as a cellular contact-dependent growth inhibition (CDI) system. This protein may be a nuclease that is specifically inhibited by its cognate immunity protein RhsAI. Upon expression of the C-terminus (residues 1284-1434) in E.coli growth is inhibited, cells elongate, nucleoids condense and plasmid DNA is degraded; these effects are blocked specifically by cognate immunity protein RshIA. Cell contact is necessary for growth inhibition.</text>
</comment>
<comment type="subcellular location">
    <subcellularLocation>
        <location evidence="4">Membrane</location>
        <topology evidence="4">Multi-pass membrane protein</topology>
    </subcellularLocation>
</comment>
<comment type="disruption phenotype">
    <text evidence="3">A double rhsA-rhsIA deletion is outcompeted by wild-type cells, restoration of rhsIA restores normal growth in competition experiments. Restoration of growth requires the RhsA-specific immunity protein, rhsIB does not restore growth.</text>
</comment>
<comment type="similarity">
    <text evidence="4">Belongs to the RHS/WapA nuclease family.</text>
</comment>
<accession>E0SAK8</accession>
<keyword id="KW-0378">Hydrolase</keyword>
<keyword id="KW-0472">Membrane</keyword>
<keyword id="KW-0540">Nuclease</keyword>
<keyword id="KW-1185">Reference proteome</keyword>
<keyword id="KW-0677">Repeat</keyword>
<keyword id="KW-0800">Toxin</keyword>
<keyword id="KW-0812">Transmembrane</keyword>
<keyword id="KW-1133">Transmembrane helix</keyword>
<keyword id="KW-0843">Virulence</keyword>
<dbReference type="EC" id="3.1.-.-"/>
<dbReference type="EMBL" id="CP002038">
    <property type="protein sequence ID" value="ADM97066.1"/>
    <property type="molecule type" value="Genomic_DNA"/>
</dbReference>
<dbReference type="RefSeq" id="WP_013316542.1">
    <property type="nucleotide sequence ID" value="NC_014500.1"/>
</dbReference>
<dbReference type="SMR" id="E0SAK8"/>
<dbReference type="STRING" id="198628.Dda3937_01758"/>
<dbReference type="KEGG" id="ddd:Dda3937_01758"/>
<dbReference type="eggNOG" id="COG3209">
    <property type="taxonomic scope" value="Bacteria"/>
</dbReference>
<dbReference type="eggNOG" id="COG4104">
    <property type="taxonomic scope" value="Bacteria"/>
</dbReference>
<dbReference type="HOGENOM" id="CLU_001218_1_8_6"/>
<dbReference type="OrthoDB" id="6043530at2"/>
<dbReference type="Proteomes" id="UP000006859">
    <property type="component" value="Chromosome"/>
</dbReference>
<dbReference type="GO" id="GO:0016020">
    <property type="term" value="C:membrane"/>
    <property type="evidence" value="ECO:0007669"/>
    <property type="project" value="UniProtKB-SubCell"/>
</dbReference>
<dbReference type="GO" id="GO:0004518">
    <property type="term" value="F:nuclease activity"/>
    <property type="evidence" value="ECO:0007669"/>
    <property type="project" value="UniProtKB-KW"/>
</dbReference>
<dbReference type="GO" id="GO:0090729">
    <property type="term" value="F:toxin activity"/>
    <property type="evidence" value="ECO:0007669"/>
    <property type="project" value="UniProtKB-KW"/>
</dbReference>
<dbReference type="CDD" id="cd14742">
    <property type="entry name" value="PAAR_RHS"/>
    <property type="match status" value="1"/>
</dbReference>
<dbReference type="Gene3D" id="2.60.200.60">
    <property type="match status" value="1"/>
</dbReference>
<dbReference type="Gene3D" id="3.90.930.1">
    <property type="match status" value="1"/>
</dbReference>
<dbReference type="Gene3D" id="2.180.10.10">
    <property type="entry name" value="RHS repeat-associated core"/>
    <property type="match status" value="2"/>
</dbReference>
<dbReference type="InterPro" id="IPR045351">
    <property type="entry name" value="DUF6531"/>
</dbReference>
<dbReference type="InterPro" id="IPR044927">
    <property type="entry name" value="Endonuclea_NS_2"/>
</dbReference>
<dbReference type="InterPro" id="IPR008727">
    <property type="entry name" value="PAAR_motif"/>
</dbReference>
<dbReference type="InterPro" id="IPR022385">
    <property type="entry name" value="Rhs_assc_core"/>
</dbReference>
<dbReference type="InterPro" id="IPR031325">
    <property type="entry name" value="RHS_repeat"/>
</dbReference>
<dbReference type="InterPro" id="IPR050708">
    <property type="entry name" value="T6SS_VgrG/RHS"/>
</dbReference>
<dbReference type="InterPro" id="IPR006530">
    <property type="entry name" value="YD"/>
</dbReference>
<dbReference type="NCBIfam" id="TIGR03696">
    <property type="entry name" value="Rhs_assc_core"/>
    <property type="match status" value="1"/>
</dbReference>
<dbReference type="NCBIfam" id="TIGR01643">
    <property type="entry name" value="YD_repeat_2x"/>
    <property type="match status" value="9"/>
</dbReference>
<dbReference type="PANTHER" id="PTHR32305">
    <property type="match status" value="1"/>
</dbReference>
<dbReference type="PANTHER" id="PTHR32305:SF15">
    <property type="entry name" value="PROTEIN RHSA-RELATED"/>
    <property type="match status" value="1"/>
</dbReference>
<dbReference type="Pfam" id="PF20148">
    <property type="entry name" value="DUF6531"/>
    <property type="match status" value="1"/>
</dbReference>
<dbReference type="Pfam" id="PF13930">
    <property type="entry name" value="Endonuclea_NS_2"/>
    <property type="match status" value="1"/>
</dbReference>
<dbReference type="Pfam" id="PF05488">
    <property type="entry name" value="PAAR_motif"/>
    <property type="match status" value="1"/>
</dbReference>
<dbReference type="Pfam" id="PF05593">
    <property type="entry name" value="RHS_repeat"/>
    <property type="match status" value="7"/>
</dbReference>
<dbReference type="SUPFAM" id="SSF69304">
    <property type="entry name" value="Tricorn protease N-terminal domain"/>
    <property type="match status" value="1"/>
</dbReference>
<proteinExistence type="evidence at protein level"/>
<reference key="1">
    <citation type="journal article" date="2011" name="J. Bacteriol.">
        <title>Genome sequence of the plant-pathogenic bacterium Dickeya dadantii 3937.</title>
        <authorList>
            <person name="Glasner J.D."/>
            <person name="Yang C.H."/>
            <person name="Reverchon S."/>
            <person name="Hugouvieux-Cotte-Pattat N."/>
            <person name="Condemine G."/>
            <person name="Bohin J.P."/>
            <person name="Van Gijsegem F."/>
            <person name="Yang S."/>
            <person name="Franza T."/>
            <person name="Expert D."/>
            <person name="Plunkett G. III"/>
            <person name="San Francisco M.J."/>
            <person name="Charkowski A.O."/>
            <person name="Py B."/>
            <person name="Bell K."/>
            <person name="Rauscher L."/>
            <person name="Rodriguez-Palenzuela P."/>
            <person name="Toussaint A."/>
            <person name="Holeva M.C."/>
            <person name="He S.Y."/>
            <person name="Douet V."/>
            <person name="Boccara M."/>
            <person name="Blanco C."/>
            <person name="Toth I."/>
            <person name="Anderson B.D."/>
            <person name="Biehl B.S."/>
            <person name="Mau B."/>
            <person name="Flynn S.M."/>
            <person name="Barras F."/>
            <person name="Lindeberg M."/>
            <person name="Birch P.R."/>
            <person name="Tsuyumu S."/>
            <person name="Shi X."/>
            <person name="Hibbing M."/>
            <person name="Yap M.N."/>
            <person name="Carpentier M."/>
            <person name="Dassa E."/>
            <person name="Umehara M."/>
            <person name="Kim J.F."/>
            <person name="Rusch M."/>
            <person name="Soni P."/>
            <person name="Mayhew G.F."/>
            <person name="Fouts D.E."/>
            <person name="Gill S.R."/>
            <person name="Blattner F.R."/>
            <person name="Keen N.T."/>
            <person name="Perna N.T."/>
        </authorList>
    </citation>
    <scope>NUCLEOTIDE SEQUENCE [LARGE SCALE GENOMIC DNA]</scope>
    <source>
        <strain>3937</strain>
    </source>
</reference>
<reference key="2">
    <citation type="journal article" date="2013" name="Proc. Natl. Acad. Sci. U.S.A.">
        <title>Rhs proteins from diverse bacteria mediate intercellular competition.</title>
        <authorList>
            <person name="Koskiniemi S."/>
            <person name="Lamoureux J.G."/>
            <person name="Nikolakakis K.C."/>
            <person name="t'Kint de Roodenbeke C."/>
            <person name="Kaplan M.D."/>
            <person name="Low D.A."/>
            <person name="Hayes C.S."/>
        </authorList>
    </citation>
    <scope>PROBABLE FUNCTION AS A DNASE</scope>
    <scope>FUNCTION AS A TOXIN</scope>
    <scope>EXPRESSION IN E.COLI</scope>
    <scope>DISRUPTION PHENOTYPE</scope>
    <source>
        <strain>3937</strain>
    </source>
</reference>
<name>RHSA_DICD3</name>
<organism>
    <name type="scientific">Dickeya dadantii (strain 3937)</name>
    <name type="common">Erwinia chrysanthemi (strain 3937)</name>
    <dbReference type="NCBI Taxonomy" id="198628"/>
    <lineage>
        <taxon>Bacteria</taxon>
        <taxon>Pseudomonadati</taxon>
        <taxon>Pseudomonadota</taxon>
        <taxon>Gammaproteobacteria</taxon>
        <taxon>Enterobacterales</taxon>
        <taxon>Pectobacteriaceae</taxon>
        <taxon>Dickeya</taxon>
    </lineage>
</organism>
<protein>
    <recommendedName>
        <fullName>Probable deoxyribonuclease RhsA</fullName>
        <ecNumber>3.1.-.-</ecNumber>
    </recommendedName>
    <alternativeName>
        <fullName>DNase RhsA</fullName>
    </alternativeName>
    <alternativeName>
        <fullName>Toxin RhsA</fullName>
    </alternativeName>
</protein>
<gene>
    <name type="primary">rhsA</name>
    <name type="ordered locus">Dda3937_01758</name>
</gene>
<feature type="chain" id="PRO_0000423972" description="Probable deoxyribonuclease RhsA">
    <location>
        <begin position="1"/>
        <end position="1434"/>
    </location>
</feature>
<feature type="transmembrane region" description="Helical" evidence="1">
    <location>
        <begin position="48"/>
        <end position="68"/>
    </location>
</feature>
<feature type="transmembrane region" description="Helical" evidence="1">
    <location>
        <begin position="70"/>
        <end position="90"/>
    </location>
</feature>
<feature type="repeat" description="YD 1" evidence="1">
    <location>
        <begin position="486"/>
        <end position="521"/>
    </location>
</feature>
<feature type="repeat" description="YD 2" evidence="1">
    <location>
        <begin position="592"/>
        <end position="628"/>
    </location>
</feature>
<feature type="repeat" description="YD 3" evidence="1">
    <location>
        <begin position="847"/>
        <end position="876"/>
    </location>
</feature>
<feature type="region of interest" description="Disordered" evidence="2">
    <location>
        <begin position="14"/>
        <end position="42"/>
    </location>
</feature>